<dbReference type="EC" id="6.3.2.9" evidence="1"/>
<dbReference type="EMBL" id="CP000051">
    <property type="protein sequence ID" value="AAX51038.1"/>
    <property type="molecule type" value="Genomic_DNA"/>
</dbReference>
<dbReference type="RefSeq" id="WP_009872138.1">
    <property type="nucleotide sequence ID" value="NC_007429.1"/>
</dbReference>
<dbReference type="SMR" id="Q3KKT4"/>
<dbReference type="KEGG" id="cta:CTA_0828"/>
<dbReference type="HOGENOM" id="CLU_032540_0_0_0"/>
<dbReference type="UniPathway" id="UPA00219"/>
<dbReference type="Proteomes" id="UP000002532">
    <property type="component" value="Chromosome"/>
</dbReference>
<dbReference type="GO" id="GO:0005737">
    <property type="term" value="C:cytoplasm"/>
    <property type="evidence" value="ECO:0007669"/>
    <property type="project" value="UniProtKB-SubCell"/>
</dbReference>
<dbReference type="GO" id="GO:0005524">
    <property type="term" value="F:ATP binding"/>
    <property type="evidence" value="ECO:0007669"/>
    <property type="project" value="UniProtKB-UniRule"/>
</dbReference>
<dbReference type="GO" id="GO:0008764">
    <property type="term" value="F:UDP-N-acetylmuramoylalanine-D-glutamate ligase activity"/>
    <property type="evidence" value="ECO:0007669"/>
    <property type="project" value="UniProtKB-UniRule"/>
</dbReference>
<dbReference type="GO" id="GO:0051301">
    <property type="term" value="P:cell division"/>
    <property type="evidence" value="ECO:0007669"/>
    <property type="project" value="UniProtKB-KW"/>
</dbReference>
<dbReference type="GO" id="GO:0071555">
    <property type="term" value="P:cell wall organization"/>
    <property type="evidence" value="ECO:0007669"/>
    <property type="project" value="UniProtKB-KW"/>
</dbReference>
<dbReference type="GO" id="GO:0009252">
    <property type="term" value="P:peptidoglycan biosynthetic process"/>
    <property type="evidence" value="ECO:0007669"/>
    <property type="project" value="UniProtKB-UniRule"/>
</dbReference>
<dbReference type="GO" id="GO:0008360">
    <property type="term" value="P:regulation of cell shape"/>
    <property type="evidence" value="ECO:0007669"/>
    <property type="project" value="UniProtKB-KW"/>
</dbReference>
<dbReference type="Gene3D" id="3.90.190.20">
    <property type="entry name" value="Mur ligase, C-terminal domain"/>
    <property type="match status" value="1"/>
</dbReference>
<dbReference type="Gene3D" id="3.40.1190.10">
    <property type="entry name" value="Mur-like, catalytic domain"/>
    <property type="match status" value="1"/>
</dbReference>
<dbReference type="Gene3D" id="3.40.50.720">
    <property type="entry name" value="NAD(P)-binding Rossmann-like Domain"/>
    <property type="match status" value="1"/>
</dbReference>
<dbReference type="HAMAP" id="MF_00639">
    <property type="entry name" value="MurD"/>
    <property type="match status" value="1"/>
</dbReference>
<dbReference type="InterPro" id="IPR036565">
    <property type="entry name" value="Mur-like_cat_sf"/>
</dbReference>
<dbReference type="InterPro" id="IPR004101">
    <property type="entry name" value="Mur_ligase_C"/>
</dbReference>
<dbReference type="InterPro" id="IPR036615">
    <property type="entry name" value="Mur_ligase_C_dom_sf"/>
</dbReference>
<dbReference type="InterPro" id="IPR013221">
    <property type="entry name" value="Mur_ligase_cen"/>
</dbReference>
<dbReference type="InterPro" id="IPR005762">
    <property type="entry name" value="MurD"/>
</dbReference>
<dbReference type="NCBIfam" id="TIGR01087">
    <property type="entry name" value="murD"/>
    <property type="match status" value="1"/>
</dbReference>
<dbReference type="PANTHER" id="PTHR43692">
    <property type="entry name" value="UDP-N-ACETYLMURAMOYLALANINE--D-GLUTAMATE LIGASE"/>
    <property type="match status" value="1"/>
</dbReference>
<dbReference type="PANTHER" id="PTHR43692:SF1">
    <property type="entry name" value="UDP-N-ACETYLMURAMOYLALANINE--D-GLUTAMATE LIGASE"/>
    <property type="match status" value="1"/>
</dbReference>
<dbReference type="Pfam" id="PF02875">
    <property type="entry name" value="Mur_ligase_C"/>
    <property type="match status" value="1"/>
</dbReference>
<dbReference type="Pfam" id="PF08245">
    <property type="entry name" value="Mur_ligase_M"/>
    <property type="match status" value="1"/>
</dbReference>
<dbReference type="Pfam" id="PF21799">
    <property type="entry name" value="MurD-like_N"/>
    <property type="match status" value="1"/>
</dbReference>
<dbReference type="SUPFAM" id="SSF51984">
    <property type="entry name" value="MurCD N-terminal domain"/>
    <property type="match status" value="1"/>
</dbReference>
<dbReference type="SUPFAM" id="SSF53623">
    <property type="entry name" value="MurD-like peptide ligases, catalytic domain"/>
    <property type="match status" value="1"/>
</dbReference>
<dbReference type="SUPFAM" id="SSF53244">
    <property type="entry name" value="MurD-like peptide ligases, peptide-binding domain"/>
    <property type="match status" value="1"/>
</dbReference>
<evidence type="ECO:0000255" key="1">
    <source>
        <dbReference type="HAMAP-Rule" id="MF_00639"/>
    </source>
</evidence>
<gene>
    <name evidence="1" type="primary">murD</name>
    <name type="ordered locus">CTA_0828</name>
</gene>
<keyword id="KW-0067">ATP-binding</keyword>
<keyword id="KW-0131">Cell cycle</keyword>
<keyword id="KW-0132">Cell division</keyword>
<keyword id="KW-0133">Cell shape</keyword>
<keyword id="KW-0961">Cell wall biogenesis/degradation</keyword>
<keyword id="KW-0963">Cytoplasm</keyword>
<keyword id="KW-0436">Ligase</keyword>
<keyword id="KW-0547">Nucleotide-binding</keyword>
<keyword id="KW-0573">Peptidoglycan synthesis</keyword>
<organism>
    <name type="scientific">Chlamydia trachomatis serovar A (strain ATCC VR-571B / DSM 19440 / HAR-13)</name>
    <dbReference type="NCBI Taxonomy" id="315277"/>
    <lineage>
        <taxon>Bacteria</taxon>
        <taxon>Pseudomonadati</taxon>
        <taxon>Chlamydiota</taxon>
        <taxon>Chlamydiia</taxon>
        <taxon>Chlamydiales</taxon>
        <taxon>Chlamydiaceae</taxon>
        <taxon>Chlamydia/Chlamydophila group</taxon>
        <taxon>Chlamydia</taxon>
    </lineage>
</organism>
<reference key="1">
    <citation type="journal article" date="2005" name="Infect. Immun.">
        <title>Comparative genomic analysis of Chlamydia trachomatis oculotropic and genitotropic strains.</title>
        <authorList>
            <person name="Carlson J.H."/>
            <person name="Porcella S.F."/>
            <person name="McClarty G."/>
            <person name="Caldwell H.D."/>
        </authorList>
    </citation>
    <scope>NUCLEOTIDE SEQUENCE [LARGE SCALE GENOMIC DNA]</scope>
    <source>
        <strain>ATCC VR-571B / DSM 19440 / HAR-13</strain>
    </source>
</reference>
<feature type="chain" id="PRO_0000257176" description="UDP-N-acetylmuramoylalanine--D-glutamate ligase">
    <location>
        <begin position="1"/>
        <end position="416"/>
    </location>
</feature>
<feature type="binding site" evidence="1">
    <location>
        <begin position="108"/>
        <end position="114"/>
    </location>
    <ligand>
        <name>ATP</name>
        <dbReference type="ChEBI" id="CHEBI:30616"/>
    </ligand>
</feature>
<protein>
    <recommendedName>
        <fullName evidence="1">UDP-N-acetylmuramoylalanine--D-glutamate ligase</fullName>
        <ecNumber evidence="1">6.3.2.9</ecNumber>
    </recommendedName>
    <alternativeName>
        <fullName evidence="1">D-glutamic acid-adding enzyme</fullName>
    </alternativeName>
    <alternativeName>
        <fullName evidence="1">UDP-N-acetylmuramoyl-L-alanyl-D-glutamate synthetase</fullName>
    </alternativeName>
</protein>
<sequence>MGLERVVVIGLGVSGRSIAHFLAQKGVCVLGVDKSLHALQNCPYIQEKYLENEEFPSQVDYVVRSPGVSKEHPWVQAAIASHIPVMADIQLAFQTEKFTERESLAITGTTGKTTTILFLEYLFKRSGIPAFAMGNVGIPILDGMQNPGVRIVEISSFQLADQEKSYPVLSGGMILNISDNHLDYHGNFSEYFQAKQNLALCMRNPDDLWVGDERFYGHLYLEEVQKYMRLLDKESALKPLYLHDKYNYCCAYLLAKTEFPISETSFIEAVATFNKPPHRMEYLGQKQGIHYINDSKATTVSATETALLGVGNQAIVILGGRNKGCTFSSLLPALRKAAKSVVAMGECAQEIARDLEEFPVTVVKNLSEALLCAEEQAVPGDVIVLSPACASFDQFRSYEERGAMFKQLVGMEEVLL</sequence>
<proteinExistence type="inferred from homology"/>
<comment type="function">
    <text evidence="1">Cell wall formation. Catalyzes the addition of glutamate to the nucleotide precursor UDP-N-acetylmuramoyl-L-alanine (UMA).</text>
</comment>
<comment type="catalytic activity">
    <reaction evidence="1">
        <text>UDP-N-acetyl-alpha-D-muramoyl-L-alanine + D-glutamate + ATP = UDP-N-acetyl-alpha-D-muramoyl-L-alanyl-D-glutamate + ADP + phosphate + H(+)</text>
        <dbReference type="Rhea" id="RHEA:16429"/>
        <dbReference type="ChEBI" id="CHEBI:15378"/>
        <dbReference type="ChEBI" id="CHEBI:29986"/>
        <dbReference type="ChEBI" id="CHEBI:30616"/>
        <dbReference type="ChEBI" id="CHEBI:43474"/>
        <dbReference type="ChEBI" id="CHEBI:83898"/>
        <dbReference type="ChEBI" id="CHEBI:83900"/>
        <dbReference type="ChEBI" id="CHEBI:456216"/>
        <dbReference type="EC" id="6.3.2.9"/>
    </reaction>
</comment>
<comment type="pathway">
    <text evidence="1">Cell wall biogenesis; peptidoglycan biosynthesis.</text>
</comment>
<comment type="subcellular location">
    <subcellularLocation>
        <location evidence="1">Cytoplasm</location>
    </subcellularLocation>
</comment>
<comment type="similarity">
    <text evidence="1">Belongs to the MurCDEF family.</text>
</comment>
<accession>Q3KKT4</accession>
<name>MURD_CHLTA</name>